<dbReference type="EC" id="6.1.1.5" evidence="1"/>
<dbReference type="EMBL" id="CP001022">
    <property type="protein sequence ID" value="ACB61403.1"/>
    <property type="molecule type" value="Genomic_DNA"/>
</dbReference>
<dbReference type="RefSeq" id="WP_012370821.1">
    <property type="nucleotide sequence ID" value="NC_010556.1"/>
</dbReference>
<dbReference type="SMR" id="B1YIS7"/>
<dbReference type="STRING" id="262543.Exig_1951"/>
<dbReference type="KEGG" id="esi:Exig_1951"/>
<dbReference type="eggNOG" id="COG0060">
    <property type="taxonomic scope" value="Bacteria"/>
</dbReference>
<dbReference type="HOGENOM" id="CLU_001493_7_1_9"/>
<dbReference type="OrthoDB" id="9810365at2"/>
<dbReference type="Proteomes" id="UP000001681">
    <property type="component" value="Chromosome"/>
</dbReference>
<dbReference type="GO" id="GO:0005829">
    <property type="term" value="C:cytosol"/>
    <property type="evidence" value="ECO:0007669"/>
    <property type="project" value="TreeGrafter"/>
</dbReference>
<dbReference type="GO" id="GO:0002161">
    <property type="term" value="F:aminoacyl-tRNA deacylase activity"/>
    <property type="evidence" value="ECO:0007669"/>
    <property type="project" value="InterPro"/>
</dbReference>
<dbReference type="GO" id="GO:0005524">
    <property type="term" value="F:ATP binding"/>
    <property type="evidence" value="ECO:0007669"/>
    <property type="project" value="UniProtKB-UniRule"/>
</dbReference>
<dbReference type="GO" id="GO:0004822">
    <property type="term" value="F:isoleucine-tRNA ligase activity"/>
    <property type="evidence" value="ECO:0007669"/>
    <property type="project" value="UniProtKB-UniRule"/>
</dbReference>
<dbReference type="GO" id="GO:0000049">
    <property type="term" value="F:tRNA binding"/>
    <property type="evidence" value="ECO:0007669"/>
    <property type="project" value="InterPro"/>
</dbReference>
<dbReference type="GO" id="GO:0008270">
    <property type="term" value="F:zinc ion binding"/>
    <property type="evidence" value="ECO:0007669"/>
    <property type="project" value="UniProtKB-UniRule"/>
</dbReference>
<dbReference type="GO" id="GO:0006428">
    <property type="term" value="P:isoleucyl-tRNA aminoacylation"/>
    <property type="evidence" value="ECO:0007669"/>
    <property type="project" value="UniProtKB-UniRule"/>
</dbReference>
<dbReference type="CDD" id="cd07960">
    <property type="entry name" value="Anticodon_Ia_Ile_BEm"/>
    <property type="match status" value="1"/>
</dbReference>
<dbReference type="CDD" id="cd00818">
    <property type="entry name" value="IleRS_core"/>
    <property type="match status" value="1"/>
</dbReference>
<dbReference type="FunFam" id="1.10.730.20:FF:000001">
    <property type="entry name" value="Isoleucine--tRNA ligase"/>
    <property type="match status" value="1"/>
</dbReference>
<dbReference type="FunFam" id="3.40.50.620:FF:000152">
    <property type="entry name" value="Isoleucine--tRNA ligase"/>
    <property type="match status" value="1"/>
</dbReference>
<dbReference type="FunFam" id="3.90.740.10:FF:000006">
    <property type="entry name" value="Isoleucine--tRNA ligase"/>
    <property type="match status" value="1"/>
</dbReference>
<dbReference type="Gene3D" id="1.10.730.20">
    <property type="match status" value="1"/>
</dbReference>
<dbReference type="Gene3D" id="3.40.50.620">
    <property type="entry name" value="HUPs"/>
    <property type="match status" value="2"/>
</dbReference>
<dbReference type="Gene3D" id="3.90.740.10">
    <property type="entry name" value="Valyl/Leucyl/Isoleucyl-tRNA synthetase, editing domain"/>
    <property type="match status" value="1"/>
</dbReference>
<dbReference type="HAMAP" id="MF_02002">
    <property type="entry name" value="Ile_tRNA_synth_type1"/>
    <property type="match status" value="1"/>
</dbReference>
<dbReference type="InterPro" id="IPR001412">
    <property type="entry name" value="aa-tRNA-synth_I_CS"/>
</dbReference>
<dbReference type="InterPro" id="IPR002300">
    <property type="entry name" value="aa-tRNA-synth_Ia"/>
</dbReference>
<dbReference type="InterPro" id="IPR033708">
    <property type="entry name" value="Anticodon_Ile_BEm"/>
</dbReference>
<dbReference type="InterPro" id="IPR002301">
    <property type="entry name" value="Ile-tRNA-ligase"/>
</dbReference>
<dbReference type="InterPro" id="IPR023585">
    <property type="entry name" value="Ile-tRNA-ligase_type1"/>
</dbReference>
<dbReference type="InterPro" id="IPR050081">
    <property type="entry name" value="Ile-tRNA_ligase"/>
</dbReference>
<dbReference type="InterPro" id="IPR013155">
    <property type="entry name" value="M/V/L/I-tRNA-synth_anticd-bd"/>
</dbReference>
<dbReference type="InterPro" id="IPR014729">
    <property type="entry name" value="Rossmann-like_a/b/a_fold"/>
</dbReference>
<dbReference type="InterPro" id="IPR009080">
    <property type="entry name" value="tRNAsynth_Ia_anticodon-bd"/>
</dbReference>
<dbReference type="InterPro" id="IPR009008">
    <property type="entry name" value="Val/Leu/Ile-tRNA-synth_edit"/>
</dbReference>
<dbReference type="InterPro" id="IPR010663">
    <property type="entry name" value="Znf_FPG/IleRS"/>
</dbReference>
<dbReference type="NCBIfam" id="TIGR00392">
    <property type="entry name" value="ileS"/>
    <property type="match status" value="1"/>
</dbReference>
<dbReference type="PANTHER" id="PTHR42765:SF1">
    <property type="entry name" value="ISOLEUCINE--TRNA LIGASE, MITOCHONDRIAL"/>
    <property type="match status" value="1"/>
</dbReference>
<dbReference type="PANTHER" id="PTHR42765">
    <property type="entry name" value="SOLEUCYL-TRNA SYNTHETASE"/>
    <property type="match status" value="1"/>
</dbReference>
<dbReference type="Pfam" id="PF08264">
    <property type="entry name" value="Anticodon_1"/>
    <property type="match status" value="1"/>
</dbReference>
<dbReference type="Pfam" id="PF00133">
    <property type="entry name" value="tRNA-synt_1"/>
    <property type="match status" value="1"/>
</dbReference>
<dbReference type="Pfam" id="PF06827">
    <property type="entry name" value="zf-FPG_IleRS"/>
    <property type="match status" value="1"/>
</dbReference>
<dbReference type="PRINTS" id="PR00984">
    <property type="entry name" value="TRNASYNTHILE"/>
</dbReference>
<dbReference type="SUPFAM" id="SSF47323">
    <property type="entry name" value="Anticodon-binding domain of a subclass of class I aminoacyl-tRNA synthetases"/>
    <property type="match status" value="1"/>
</dbReference>
<dbReference type="SUPFAM" id="SSF52374">
    <property type="entry name" value="Nucleotidylyl transferase"/>
    <property type="match status" value="1"/>
</dbReference>
<dbReference type="SUPFAM" id="SSF50677">
    <property type="entry name" value="ValRS/IleRS/LeuRS editing domain"/>
    <property type="match status" value="1"/>
</dbReference>
<dbReference type="PROSITE" id="PS00178">
    <property type="entry name" value="AA_TRNA_LIGASE_I"/>
    <property type="match status" value="1"/>
</dbReference>
<gene>
    <name evidence="1" type="primary">ileS</name>
    <name type="ordered locus">Exig_1951</name>
</gene>
<organism>
    <name type="scientific">Exiguobacterium sibiricum (strain DSM 17290 / CCUG 55495 / CIP 109462 / JCM 13490 / 255-15)</name>
    <dbReference type="NCBI Taxonomy" id="262543"/>
    <lineage>
        <taxon>Bacteria</taxon>
        <taxon>Bacillati</taxon>
        <taxon>Bacillota</taxon>
        <taxon>Bacilli</taxon>
        <taxon>Bacillales</taxon>
        <taxon>Bacillales Family XII. Incertae Sedis</taxon>
        <taxon>Exiguobacterium</taxon>
    </lineage>
</organism>
<protein>
    <recommendedName>
        <fullName evidence="1">Isoleucine--tRNA ligase</fullName>
        <ecNumber evidence="1">6.1.1.5</ecNumber>
    </recommendedName>
    <alternativeName>
        <fullName evidence="1">Isoleucyl-tRNA synthetase</fullName>
        <shortName evidence="1">IleRS</shortName>
    </alternativeName>
</protein>
<feature type="chain" id="PRO_1000189166" description="Isoleucine--tRNA ligase">
    <location>
        <begin position="1"/>
        <end position="911"/>
    </location>
</feature>
<feature type="short sequence motif" description="'HIGH' region">
    <location>
        <begin position="57"/>
        <end position="67"/>
    </location>
</feature>
<feature type="short sequence motif" description="'KMSKS' region">
    <location>
        <begin position="592"/>
        <end position="596"/>
    </location>
</feature>
<feature type="binding site" evidence="1">
    <location>
        <position position="551"/>
    </location>
    <ligand>
        <name>L-isoleucyl-5'-AMP</name>
        <dbReference type="ChEBI" id="CHEBI:178002"/>
    </ligand>
</feature>
<feature type="binding site" evidence="1">
    <location>
        <position position="595"/>
    </location>
    <ligand>
        <name>ATP</name>
        <dbReference type="ChEBI" id="CHEBI:30616"/>
    </ligand>
</feature>
<feature type="binding site" evidence="1">
    <location>
        <position position="881"/>
    </location>
    <ligand>
        <name>Zn(2+)</name>
        <dbReference type="ChEBI" id="CHEBI:29105"/>
    </ligand>
</feature>
<feature type="binding site" evidence="1">
    <location>
        <position position="884"/>
    </location>
    <ligand>
        <name>Zn(2+)</name>
        <dbReference type="ChEBI" id="CHEBI:29105"/>
    </ligand>
</feature>
<feature type="binding site" evidence="1">
    <location>
        <position position="901"/>
    </location>
    <ligand>
        <name>Zn(2+)</name>
        <dbReference type="ChEBI" id="CHEBI:29105"/>
    </ligand>
</feature>
<feature type="binding site" evidence="1">
    <location>
        <position position="904"/>
    </location>
    <ligand>
        <name>Zn(2+)</name>
        <dbReference type="ChEBI" id="CHEBI:29105"/>
    </ligand>
</feature>
<reference key="1">
    <citation type="submission" date="2008-04" db="EMBL/GenBank/DDBJ databases">
        <title>Complete sequence of chromosome of Exiguobacterium sibiricum 255-15.</title>
        <authorList>
            <consortium name="US DOE Joint Genome Institute"/>
            <person name="Copeland A."/>
            <person name="Lucas S."/>
            <person name="Lapidus A."/>
            <person name="Glavina del Rio T."/>
            <person name="Dalin E."/>
            <person name="Tice H."/>
            <person name="Bruce D."/>
            <person name="Goodwin L."/>
            <person name="Pitluck S."/>
            <person name="Kiss H."/>
            <person name="Chertkov O."/>
            <person name="Monk C."/>
            <person name="Brettin T."/>
            <person name="Detter J.C."/>
            <person name="Han C."/>
            <person name="Kuske C.R."/>
            <person name="Schmutz J."/>
            <person name="Larimer F."/>
            <person name="Land M."/>
            <person name="Hauser L."/>
            <person name="Kyrpides N."/>
            <person name="Mikhailova N."/>
            <person name="Vishnivetskaya T."/>
            <person name="Rodrigues D.F."/>
            <person name="Gilichinsky D."/>
            <person name="Tiedje J."/>
            <person name="Richardson P."/>
        </authorList>
    </citation>
    <scope>NUCLEOTIDE SEQUENCE [LARGE SCALE GENOMIC DNA]</scope>
    <source>
        <strain>DSM 17290 / CCUG 55495 / CIP 109462 / JCM 13490 / 255-15</strain>
    </source>
</reference>
<comment type="function">
    <text evidence="1">Catalyzes the attachment of isoleucine to tRNA(Ile). As IleRS can inadvertently accommodate and process structurally similar amino acids such as valine, to avoid such errors it has two additional distinct tRNA(Ile)-dependent editing activities. One activity is designated as 'pretransfer' editing and involves the hydrolysis of activated Val-AMP. The other activity is designated 'posttransfer' editing and involves deacylation of mischarged Val-tRNA(Ile).</text>
</comment>
<comment type="catalytic activity">
    <reaction evidence="1">
        <text>tRNA(Ile) + L-isoleucine + ATP = L-isoleucyl-tRNA(Ile) + AMP + diphosphate</text>
        <dbReference type="Rhea" id="RHEA:11060"/>
        <dbReference type="Rhea" id="RHEA-COMP:9666"/>
        <dbReference type="Rhea" id="RHEA-COMP:9695"/>
        <dbReference type="ChEBI" id="CHEBI:30616"/>
        <dbReference type="ChEBI" id="CHEBI:33019"/>
        <dbReference type="ChEBI" id="CHEBI:58045"/>
        <dbReference type="ChEBI" id="CHEBI:78442"/>
        <dbReference type="ChEBI" id="CHEBI:78528"/>
        <dbReference type="ChEBI" id="CHEBI:456215"/>
        <dbReference type="EC" id="6.1.1.5"/>
    </reaction>
</comment>
<comment type="cofactor">
    <cofactor evidence="1">
        <name>Zn(2+)</name>
        <dbReference type="ChEBI" id="CHEBI:29105"/>
    </cofactor>
    <text evidence="1">Binds 1 zinc ion per subunit.</text>
</comment>
<comment type="subunit">
    <text evidence="1">Monomer.</text>
</comment>
<comment type="subcellular location">
    <subcellularLocation>
        <location evidence="1">Cytoplasm</location>
    </subcellularLocation>
</comment>
<comment type="domain">
    <text evidence="1">IleRS has two distinct active sites: one for aminoacylation and one for editing. The misactivated valine is translocated from the active site to the editing site, which sterically excludes the correctly activated isoleucine. The single editing site contains two valyl binding pockets, one specific for each substrate (Val-AMP or Val-tRNA(Ile)).</text>
</comment>
<comment type="similarity">
    <text evidence="1">Belongs to the class-I aminoacyl-tRNA synthetase family. IleS type 1 subfamily.</text>
</comment>
<keyword id="KW-0030">Aminoacyl-tRNA synthetase</keyword>
<keyword id="KW-0067">ATP-binding</keyword>
<keyword id="KW-0963">Cytoplasm</keyword>
<keyword id="KW-0436">Ligase</keyword>
<keyword id="KW-0479">Metal-binding</keyword>
<keyword id="KW-0547">Nucleotide-binding</keyword>
<keyword id="KW-0648">Protein biosynthesis</keyword>
<keyword id="KW-1185">Reference proteome</keyword>
<keyword id="KW-0862">Zinc</keyword>
<evidence type="ECO:0000255" key="1">
    <source>
        <dbReference type="HAMAP-Rule" id="MF_02002"/>
    </source>
</evidence>
<sequence length="911" mass="102680">MEYKDTLLMMKTEFLMRGNLPKREPDMQARWNEMNLYEAVQEKNAGKPTFILHDGPPYANGDIHMGHGLNKVLKDIVVRYKSMNGFRSPYVPGWDTHGLPIETALQKAGVDRKSMSVAEFRELCAKYALEQVDHQREQFKRLGVLGDYDNPYITLQPEFEAAQIRLFGDMANKGYIYKGKKPVYWSPSSESALAEAEIEYQDKRSAAIYVAFQVMDGKNILEPTDHFVIWTTTPWTIPANLGISVSGELTYARIEHEGKGYIVAETLVPEVIEALGWEGATIGRVFDGADFEYIKAKHPLYDRESLVMLGDHVTAEATGVVHTAPGHGEDDFRIGQAYGLDVLCPVDDKGVMTAEAPGFEGLFYEDANKEIGVALEEAGALLKLSFIKHSYPHDWRTKKPVIFRATPQWFASIKDFRAEILDEIKEVQWVPEWGETRLHNMFKDRGDWVISRQRAWGVPLPIFYAEDGTEIVTPETIDHIANLFAAHGSNVWYEREAVDLLPEGFTHPASPNGIFKKETDIMDVWFDSGSSHAGVLATRPELERPADLYLEGSDQYRGWFNSSLSTSVATTGKAPYKAVVSHGFVLDGQGRKMSKSIGNTIAPIQIMQQFGAEILRLWVASVDYQSDVRASMDNFKQVSESYRKIRNTVRFLLGNLDQFDHTTHRVAFKDLPESDRFMRTKLDQLVGKVKAAYDAYDFMAVYQLLHNFCVLDLSSFYLDYTKDILYIEKEDAPARRAVQTVMYDTVVTLLQLMAPVLPHTADEAWEFVPGVETASIFLTDLPEAPEMTEEGLALIAKWNSFLVFRDDVLKALEEARAEKLVGKTLEAKLLLAPNDETKALLATIDHLEQLLQVSQIEFVASAEKSYGTTGITVLKADGEKCERCWTYSTELGQDPAHPTLCPRCTEVVNSL</sequence>
<proteinExistence type="inferred from homology"/>
<accession>B1YIS7</accession>
<name>SYI_EXIS2</name>